<gene>
    <name type="primary">mdh</name>
</gene>
<reference key="1">
    <citation type="journal article" date="1992" name="J. Bacteriol.">
        <title>Malate dehydrogenase from Chlorobium vibrioforme, Chlorobium tepidum, and Heliobacterium gestii: purification, characterization, and investigation of dinucleotide binding by dehydrogenases by use of empirical methods of protein sequence analysis.</title>
        <authorList>
            <person name="Charnock C.B."/>
            <person name="Refseth U.H."/>
            <person name="Strevaag R."/>
        </authorList>
    </citation>
    <scope>PROTEIN SEQUENCE</scope>
</reference>
<sequence>MTKKITIIGAGNVGATAAXXAASKDLGDIV</sequence>
<protein>
    <recommendedName>
        <fullName evidence="2">Malate dehydrogenase</fullName>
        <ecNumber evidence="2">1.1.1.37</ecNumber>
    </recommendedName>
</protein>
<dbReference type="EC" id="1.1.1.37" evidence="2"/>
<dbReference type="GO" id="GO:0030060">
    <property type="term" value="F:L-malate dehydrogenase (NAD+) activity"/>
    <property type="evidence" value="ECO:0007669"/>
    <property type="project" value="UniProtKB-EC"/>
</dbReference>
<dbReference type="GO" id="GO:0006099">
    <property type="term" value="P:tricarboxylic acid cycle"/>
    <property type="evidence" value="ECO:0007669"/>
    <property type="project" value="UniProtKB-KW"/>
</dbReference>
<dbReference type="Gene3D" id="3.40.50.720">
    <property type="entry name" value="NAD(P)-binding Rossmann-like Domain"/>
    <property type="match status" value="1"/>
</dbReference>
<dbReference type="InterPro" id="IPR036291">
    <property type="entry name" value="NAD(P)-bd_dom_sf"/>
</dbReference>
<dbReference type="SUPFAM" id="SSF51735">
    <property type="entry name" value="NAD(P)-binding Rossmann-fold domains"/>
    <property type="match status" value="1"/>
</dbReference>
<accession>P80037</accession>
<keyword id="KW-0903">Direct protein sequencing</keyword>
<keyword id="KW-0520">NAD</keyword>
<keyword id="KW-0560">Oxidoreductase</keyword>
<keyword id="KW-0816">Tricarboxylic acid cycle</keyword>
<feature type="chain" id="PRO_0000113455" description="Malate dehydrogenase">
    <location>
        <begin position="1"/>
        <end position="30" status="greater than"/>
    </location>
</feature>
<feature type="binding site" evidence="1">
    <location>
        <begin position="9"/>
        <end position="14"/>
    </location>
    <ligand>
        <name>NAD(+)</name>
        <dbReference type="ChEBI" id="CHEBI:57540"/>
    </ligand>
</feature>
<feature type="non-terminal residue">
    <location>
        <position position="30"/>
    </location>
</feature>
<name>MDH_HELGE</name>
<evidence type="ECO:0000250" key="1">
    <source>
        <dbReference type="UniProtKB" id="P80040"/>
    </source>
</evidence>
<evidence type="ECO:0000250" key="2">
    <source>
        <dbReference type="UniProtKB" id="Q25QU7"/>
    </source>
</evidence>
<evidence type="ECO:0000305" key="3"/>
<comment type="function">
    <text evidence="2">Catalyzes the reversible oxidation of malate to oxaloacetate.</text>
</comment>
<comment type="catalytic activity">
    <reaction evidence="2">
        <text>(S)-malate + NAD(+) = oxaloacetate + NADH + H(+)</text>
        <dbReference type="Rhea" id="RHEA:21432"/>
        <dbReference type="ChEBI" id="CHEBI:15378"/>
        <dbReference type="ChEBI" id="CHEBI:15589"/>
        <dbReference type="ChEBI" id="CHEBI:16452"/>
        <dbReference type="ChEBI" id="CHEBI:57540"/>
        <dbReference type="ChEBI" id="CHEBI:57945"/>
        <dbReference type="EC" id="1.1.1.37"/>
    </reaction>
</comment>
<comment type="similarity">
    <text evidence="3">Belongs to the LDH/MDH superfamily. MDH type 3 family.</text>
</comment>
<proteinExistence type="evidence at protein level"/>
<organism>
    <name type="scientific">Heliomicrobium gestii</name>
    <name type="common">Heliobacterium gestii</name>
    <dbReference type="NCBI Taxonomy" id="2699"/>
    <lineage>
        <taxon>Bacteria</taxon>
        <taxon>Bacillati</taxon>
        <taxon>Bacillota</taxon>
        <taxon>Clostridia</taxon>
        <taxon>Eubacteriales</taxon>
        <taxon>Heliobacteriaceae</taxon>
        <taxon>Heliomicrobium</taxon>
    </lineage>
</organism>